<comment type="subcellular location">
    <subcellularLocation>
        <location evidence="3">Lipid droplet</location>
    </subcellularLocation>
    <subcellularLocation>
        <location evidence="2">Membrane</location>
        <topology evidence="2">Multi-pass membrane protein</topology>
    </subcellularLocation>
    <text evidence="5">Surface of oil bodies. Oleosins exist at a monolayer lipid/water interface.</text>
</comment>
<comment type="tissue specificity">
    <text evidence="3">Expressed in megagametophytes (at protein level).</text>
</comment>
<comment type="domain">
    <text evidence="5">The proline-knot motif may be involved in targeting to lipid bodies.</text>
</comment>
<comment type="similarity">
    <text evidence="5">Belongs to the oleosin family.</text>
</comment>
<evidence type="ECO:0000250" key="1">
    <source>
        <dbReference type="UniProtKB" id="C3S7F1"/>
    </source>
</evidence>
<evidence type="ECO:0000255" key="2"/>
<evidence type="ECO:0000269" key="3">
    <source>
    </source>
</evidence>
<evidence type="ECO:0000303" key="4">
    <source>
    </source>
</evidence>
<evidence type="ECO:0000305" key="5"/>
<evidence type="ECO:0000305" key="6">
    <source>
    </source>
</evidence>
<evidence type="ECO:0000312" key="7">
    <source>
        <dbReference type="EMBL" id="AIC74542.1"/>
    </source>
</evidence>
<organism>
    <name type="scientific">Pinus massoniana</name>
    <name type="common">Chinese red pine</name>
    <dbReference type="NCBI Taxonomy" id="88730"/>
    <lineage>
        <taxon>Eukaryota</taxon>
        <taxon>Viridiplantae</taxon>
        <taxon>Streptophyta</taxon>
        <taxon>Embryophyta</taxon>
        <taxon>Tracheophyta</taxon>
        <taxon>Spermatophyta</taxon>
        <taxon>Pinopsida</taxon>
        <taxon>Pinidae</taxon>
        <taxon>Conifers I</taxon>
        <taxon>Pinales</taxon>
        <taxon>Pinaceae</taxon>
        <taxon>Pinus</taxon>
        <taxon>Pinus subgen. Pinus</taxon>
    </lineage>
</organism>
<sequence>MEAAQQKNESVMDYAPDWTQISVLFFVVMGGGVLASLSALALAGTVVLMLILTPVFLLLSPVILPVGAVIALAAAAFMAAVTIGIAGAAALIWVYRYARGQPTVGSEKIDRARVRLFEAAEKLKAQLQYKLFNENSKANFD</sequence>
<feature type="initiator methionine" description="Removed" evidence="1">
    <location>
        <position position="1"/>
    </location>
</feature>
<feature type="chain" id="PRO_0000449965" description="Oleosin L">
    <location>
        <begin position="2"/>
        <end position="141"/>
    </location>
</feature>
<feature type="transmembrane region" description="Helical" evidence="2">
    <location>
        <begin position="23"/>
        <end position="43"/>
    </location>
</feature>
<feature type="transmembrane region" description="Helical" evidence="2">
    <location>
        <begin position="46"/>
        <end position="66"/>
    </location>
</feature>
<feature type="transmembrane region" description="Helical" evidence="2">
    <location>
        <begin position="74"/>
        <end position="94"/>
    </location>
</feature>
<feature type="short sequence motif" description="Proline-knot" evidence="6">
    <location>
        <begin position="54"/>
        <end position="65"/>
    </location>
</feature>
<reference evidence="7" key="1">
    <citation type="journal article" date="2014" name="Plant Physiol. Biochem.">
        <title>Identification of caleosin and two oleosin isoforms in oil bodies of pine megagametophytes.</title>
        <authorList>
            <person name="Pasaribu B."/>
            <person name="Chung T.Y."/>
            <person name="Chen C.S."/>
            <person name="Wang S.L."/>
            <person name="Jiang P.L."/>
            <person name="Tzen J.T."/>
        </authorList>
    </citation>
    <scope>NUCLEOTIDE SEQUENCE [MRNA]</scope>
    <scope>PROTEIN SEQUENCE OF 6-19</scope>
    <scope>SUBCELLULAR LOCATION</scope>
    <scope>TISSUE SPECIFICITY</scope>
    <scope>IDENTIFICATION BY MASS SPECTROMETRY</scope>
    <source>
        <tissue evidence="4">Megagametophyte</tissue>
    </source>
</reference>
<name>OLEL_PINMS</name>
<protein>
    <recommendedName>
        <fullName evidence="4 7">Oleosin L</fullName>
    </recommendedName>
</protein>
<accession>A0A060L4I9</accession>
<proteinExistence type="evidence at protein level"/>
<keyword id="KW-0903">Direct protein sequencing</keyword>
<keyword id="KW-0551">Lipid droplet</keyword>
<keyword id="KW-0472">Membrane</keyword>
<keyword id="KW-0812">Transmembrane</keyword>
<keyword id="KW-1133">Transmembrane helix</keyword>
<dbReference type="EMBL" id="KJ415241">
    <property type="protein sequence ID" value="AIC74542.1"/>
    <property type="molecule type" value="mRNA"/>
</dbReference>
<dbReference type="SMR" id="A0A060L4I9"/>
<dbReference type="GO" id="GO:0016020">
    <property type="term" value="C:membrane"/>
    <property type="evidence" value="ECO:0007669"/>
    <property type="project" value="UniProtKB-SubCell"/>
</dbReference>
<dbReference type="GO" id="GO:0012511">
    <property type="term" value="C:monolayer-surrounded lipid storage body"/>
    <property type="evidence" value="ECO:0000314"/>
    <property type="project" value="UniProtKB"/>
</dbReference>
<dbReference type="GO" id="GO:0019915">
    <property type="term" value="P:lipid storage"/>
    <property type="evidence" value="ECO:0007669"/>
    <property type="project" value="TreeGrafter"/>
</dbReference>
<dbReference type="InterPro" id="IPR000136">
    <property type="entry name" value="Oleosin"/>
</dbReference>
<dbReference type="PANTHER" id="PTHR33203">
    <property type="entry name" value="OLEOSIN"/>
    <property type="match status" value="1"/>
</dbReference>
<dbReference type="PANTHER" id="PTHR33203:SF24">
    <property type="entry name" value="OLEOSIN"/>
    <property type="match status" value="1"/>
</dbReference>
<dbReference type="Pfam" id="PF01277">
    <property type="entry name" value="Oleosin"/>
    <property type="match status" value="1"/>
</dbReference>